<name>RL3_RHOBA</name>
<reference key="1">
    <citation type="journal article" date="2003" name="Proc. Natl. Acad. Sci. U.S.A.">
        <title>Complete genome sequence of the marine planctomycete Pirellula sp. strain 1.</title>
        <authorList>
            <person name="Gloeckner F.O."/>
            <person name="Kube M."/>
            <person name="Bauer M."/>
            <person name="Teeling H."/>
            <person name="Lombardot T."/>
            <person name="Ludwig W."/>
            <person name="Gade D."/>
            <person name="Beck A."/>
            <person name="Borzym K."/>
            <person name="Heitmann K."/>
            <person name="Rabus R."/>
            <person name="Schlesner H."/>
            <person name="Amann R."/>
            <person name="Reinhardt R."/>
        </authorList>
    </citation>
    <scope>NUCLEOTIDE SEQUENCE [LARGE SCALE GENOMIC DNA]</scope>
    <source>
        <strain>DSM 10527 / NCIMB 13988 / SH1</strain>
    </source>
</reference>
<protein>
    <recommendedName>
        <fullName evidence="1">Large ribosomal subunit protein uL3</fullName>
    </recommendedName>
    <alternativeName>
        <fullName evidence="3">50S ribosomal protein L3</fullName>
    </alternativeName>
</protein>
<gene>
    <name evidence="1" type="primary">rplC</name>
    <name type="ordered locus">RB7833</name>
</gene>
<organism>
    <name type="scientific">Rhodopirellula baltica (strain DSM 10527 / NCIMB 13988 / SH1)</name>
    <dbReference type="NCBI Taxonomy" id="243090"/>
    <lineage>
        <taxon>Bacteria</taxon>
        <taxon>Pseudomonadati</taxon>
        <taxon>Planctomycetota</taxon>
        <taxon>Planctomycetia</taxon>
        <taxon>Pirellulales</taxon>
        <taxon>Pirellulaceae</taxon>
        <taxon>Rhodopirellula</taxon>
    </lineage>
</organism>
<proteinExistence type="inferred from homology"/>
<comment type="function">
    <text evidence="1">One of the primary rRNA binding proteins, it binds directly near the 3'-end of the 23S rRNA, where it nucleates assembly of the 50S subunit.</text>
</comment>
<comment type="subunit">
    <text evidence="1">Part of the 50S ribosomal subunit. Forms a cluster with proteins L14 and L19.</text>
</comment>
<comment type="similarity">
    <text evidence="1">Belongs to the universal ribosomal protein uL3 family.</text>
</comment>
<dbReference type="EMBL" id="BX294146">
    <property type="protein sequence ID" value="CAD75599.1"/>
    <property type="molecule type" value="Genomic_DNA"/>
</dbReference>
<dbReference type="RefSeq" id="NP_868052.1">
    <property type="nucleotide sequence ID" value="NC_005027.1"/>
</dbReference>
<dbReference type="RefSeq" id="WP_011121602.1">
    <property type="nucleotide sequence ID" value="NC_005027.1"/>
</dbReference>
<dbReference type="SMR" id="Q7UN20"/>
<dbReference type="FunCoup" id="Q7UN20">
    <property type="interactions" value="630"/>
</dbReference>
<dbReference type="STRING" id="243090.RB7833"/>
<dbReference type="EnsemblBacteria" id="CAD75599">
    <property type="protein sequence ID" value="CAD75599"/>
    <property type="gene ID" value="RB7833"/>
</dbReference>
<dbReference type="KEGG" id="rba:RB7833"/>
<dbReference type="PATRIC" id="fig|243090.15.peg.3782"/>
<dbReference type="eggNOG" id="COG0087">
    <property type="taxonomic scope" value="Bacteria"/>
</dbReference>
<dbReference type="HOGENOM" id="CLU_044142_4_1_0"/>
<dbReference type="InParanoid" id="Q7UN20"/>
<dbReference type="OrthoDB" id="9806135at2"/>
<dbReference type="Proteomes" id="UP000001025">
    <property type="component" value="Chromosome"/>
</dbReference>
<dbReference type="GO" id="GO:0022625">
    <property type="term" value="C:cytosolic large ribosomal subunit"/>
    <property type="evidence" value="ECO:0000318"/>
    <property type="project" value="GO_Central"/>
</dbReference>
<dbReference type="GO" id="GO:0019843">
    <property type="term" value="F:rRNA binding"/>
    <property type="evidence" value="ECO:0007669"/>
    <property type="project" value="UniProtKB-UniRule"/>
</dbReference>
<dbReference type="GO" id="GO:0003735">
    <property type="term" value="F:structural constituent of ribosome"/>
    <property type="evidence" value="ECO:0000318"/>
    <property type="project" value="GO_Central"/>
</dbReference>
<dbReference type="GO" id="GO:0006412">
    <property type="term" value="P:translation"/>
    <property type="evidence" value="ECO:0007669"/>
    <property type="project" value="UniProtKB-UniRule"/>
</dbReference>
<dbReference type="FunFam" id="2.40.30.10:FF:000004">
    <property type="entry name" value="50S ribosomal protein L3"/>
    <property type="match status" value="1"/>
</dbReference>
<dbReference type="Gene3D" id="3.30.160.810">
    <property type="match status" value="1"/>
</dbReference>
<dbReference type="Gene3D" id="2.40.30.10">
    <property type="entry name" value="Translation factors"/>
    <property type="match status" value="1"/>
</dbReference>
<dbReference type="HAMAP" id="MF_01325_B">
    <property type="entry name" value="Ribosomal_uL3_B"/>
    <property type="match status" value="1"/>
</dbReference>
<dbReference type="InterPro" id="IPR000597">
    <property type="entry name" value="Ribosomal_uL3"/>
</dbReference>
<dbReference type="InterPro" id="IPR019927">
    <property type="entry name" value="Ribosomal_uL3_bac/org-type"/>
</dbReference>
<dbReference type="InterPro" id="IPR019926">
    <property type="entry name" value="Ribosomal_uL3_CS"/>
</dbReference>
<dbReference type="InterPro" id="IPR009000">
    <property type="entry name" value="Transl_B-barrel_sf"/>
</dbReference>
<dbReference type="NCBIfam" id="TIGR03625">
    <property type="entry name" value="L3_bact"/>
    <property type="match status" value="1"/>
</dbReference>
<dbReference type="PANTHER" id="PTHR11229">
    <property type="entry name" value="50S RIBOSOMAL PROTEIN L3"/>
    <property type="match status" value="1"/>
</dbReference>
<dbReference type="PANTHER" id="PTHR11229:SF16">
    <property type="entry name" value="LARGE RIBOSOMAL SUBUNIT PROTEIN UL3C"/>
    <property type="match status" value="1"/>
</dbReference>
<dbReference type="Pfam" id="PF00297">
    <property type="entry name" value="Ribosomal_L3"/>
    <property type="match status" value="1"/>
</dbReference>
<dbReference type="SUPFAM" id="SSF50447">
    <property type="entry name" value="Translation proteins"/>
    <property type="match status" value="1"/>
</dbReference>
<dbReference type="PROSITE" id="PS00474">
    <property type="entry name" value="RIBOSOMAL_L3"/>
    <property type="match status" value="1"/>
</dbReference>
<feature type="chain" id="PRO_0000077144" description="Large ribosomal subunit protein uL3">
    <location>
        <begin position="1"/>
        <end position="228"/>
    </location>
</feature>
<feature type="region of interest" description="Disordered" evidence="2">
    <location>
        <begin position="157"/>
        <end position="176"/>
    </location>
</feature>
<evidence type="ECO:0000255" key="1">
    <source>
        <dbReference type="HAMAP-Rule" id="MF_01325"/>
    </source>
</evidence>
<evidence type="ECO:0000256" key="2">
    <source>
        <dbReference type="SAM" id="MobiDB-lite"/>
    </source>
</evidence>
<evidence type="ECO:0000305" key="3"/>
<keyword id="KW-1185">Reference proteome</keyword>
<keyword id="KW-0687">Ribonucleoprotein</keyword>
<keyword id="KW-0689">Ribosomal protein</keyword>
<keyword id="KW-0694">RNA-binding</keyword>
<keyword id="KW-0699">rRNA-binding</keyword>
<accession>Q7UN20</accession>
<sequence length="228" mass="24681">MSPSILGRKIGMTQIFLEDGTAVPVTVVQAGPCHVLQVRSKDRDGYEAVQMGFEDKPRRLAKRSERGQVATIESKRSKKRSAAGIEAPAKADCEPQRFVREFRGSSEANVGDTLTVEQFNDVKKVDITGTSKGRGFAGVMKRHNFAGQRATHGVKKCHRHAGGTGMSASPSRTFKGKRMAGQYGNAKVTTRNLEVVRVDAENNLLMIRGAVPGPNGGFVSIRQTNKVG</sequence>